<accession>Q99XL8</accession>
<accession>Q48W52</accession>
<proteinExistence type="inferred from homology"/>
<comment type="function">
    <text evidence="1">This protein is involved in the repair of mismatches in DNA. It is possible that it carries out the mismatch recognition step. This protein has a weak ATPase activity (By similarity).</text>
</comment>
<comment type="similarity">
    <text evidence="3">Belongs to the DNA mismatch repair MutS family.</text>
</comment>
<evidence type="ECO:0000250" key="1"/>
<evidence type="ECO:0000255" key="2"/>
<evidence type="ECO:0000305" key="3"/>
<sequence>MAKTNISPGMQQYLDIKKDYPDAFLLFRMGDFYELFYEDAVKAAQLLEIGLTSRNKNAENPIPMAGVPHHSAQQYIDVLIELGYKVAVAEQMEDPKQAVGVVKREVVQVITPGTVVDSAKPDSANNFLVAVDFDGCRYGLAYMDVSTGEFCVTDLADFTSVRSEIQNLKAKEVLLGFDLSEEEQTILVKQMNLLLSYEETVYEDKSLIDGQLTTVELTAAGKLLQYVHKTQMRELSHLQALVHYEIKDYLQMSYATKSSLDLVENARTNKKHGSLYWLLDETKTAMGMRLLRSWIDRPLVSKEAILERQEIIQVFLNAFIERTDLSNSLKGVYDIERLSSRVSFGKANPKDLLQLGHTLAQVPYIKAILESFDSPCVDKLVNDIDSLPELEYLIRTAIDPDAPATISEGSIIRNGFDERLDHYRKVMREGTGWIADIEAKERQASGINNLKIDYNKKDGYYFHVTNSNLSLVPEHFFRKATLKNSERYGTAELAKIEGQMLEAREESSSLEYDIFMCIRAQVETYINRLQKLAKILATVDVLQSLAVVAETNHYIRPQFNDNHVITIQEGRHAVVEKVMGVQEYIPNSISFDQQTSIQLITGPNMSGKSTYMRQLALTVIMAQMGSFVAADHVDLPLFDAIFTRIGAADDLISGQSTFMVEMMEANQAIKRASDNSLILFDELGRGTATYDGMALAQAIIEYIHDRVGAKTIFATHYHELTDLSTNLTSLVNVHVATLEKDGDVTFLHKIAEGPADKSYGIHVAKIAGLPKSLLKRADEVLTRLETQSRSTEIISVPSQVESSSAVRQGQLSLFGDEEKAHEIRQALEVIDVMNMTPLQAMTTLYELKKLL</sequence>
<reference key="1">
    <citation type="journal article" date="2001" name="Proc. Natl. Acad. Sci. U.S.A.">
        <title>Complete genome sequence of an M1 strain of Streptococcus pyogenes.</title>
        <authorList>
            <person name="Ferretti J.J."/>
            <person name="McShan W.M."/>
            <person name="Ajdic D.J."/>
            <person name="Savic D.J."/>
            <person name="Savic G."/>
            <person name="Lyon K."/>
            <person name="Primeaux C."/>
            <person name="Sezate S."/>
            <person name="Suvorov A.N."/>
            <person name="Kenton S."/>
            <person name="Lai H.S."/>
            <person name="Lin S.P."/>
            <person name="Qian Y."/>
            <person name="Jia H.G."/>
            <person name="Najar F.Z."/>
            <person name="Ren Q."/>
            <person name="Zhu H."/>
            <person name="Song L."/>
            <person name="White J."/>
            <person name="Yuan X."/>
            <person name="Clifton S.W."/>
            <person name="Roe B.A."/>
            <person name="McLaughlin R.E."/>
        </authorList>
    </citation>
    <scope>NUCLEOTIDE SEQUENCE [LARGE SCALE GENOMIC DNA]</scope>
    <source>
        <strain>ATCC 700294 / SF370 / Serotype M1</strain>
    </source>
</reference>
<reference key="2">
    <citation type="journal article" date="2005" name="J. Infect. Dis.">
        <title>Evolutionary origin and emergence of a highly successful clone of serotype M1 group A Streptococcus involved multiple horizontal gene transfer events.</title>
        <authorList>
            <person name="Sumby P."/>
            <person name="Porcella S.F."/>
            <person name="Madrigal A.G."/>
            <person name="Barbian K.D."/>
            <person name="Virtaneva K."/>
            <person name="Ricklefs S.M."/>
            <person name="Sturdevant D.E."/>
            <person name="Graham M.R."/>
            <person name="Vuopio-Varkila J."/>
            <person name="Hoe N.P."/>
            <person name="Musser J.M."/>
        </authorList>
    </citation>
    <scope>NUCLEOTIDE SEQUENCE [LARGE SCALE GENOMIC DNA]</scope>
    <source>
        <strain>ATCC BAA-947 / MGAS5005 / Serotype M1</strain>
    </source>
</reference>
<feature type="chain" id="PRO_0000115149" description="DNA mismatch repair protein MutS">
    <location>
        <begin position="1"/>
        <end position="851"/>
    </location>
</feature>
<feature type="binding site" evidence="2">
    <location>
        <begin position="602"/>
        <end position="609"/>
    </location>
    <ligand>
        <name>ATP</name>
        <dbReference type="ChEBI" id="CHEBI:30616"/>
    </ligand>
</feature>
<keyword id="KW-0067">ATP-binding</keyword>
<keyword id="KW-0227">DNA damage</keyword>
<keyword id="KW-0234">DNA repair</keyword>
<keyword id="KW-0238">DNA-binding</keyword>
<keyword id="KW-0547">Nucleotide-binding</keyword>
<keyword id="KW-1185">Reference proteome</keyword>
<name>MUTS_STRP1</name>
<protein>
    <recommendedName>
        <fullName>DNA mismatch repair protein MutS</fullName>
    </recommendedName>
</protein>
<organism>
    <name type="scientific">Streptococcus pyogenes serotype M1</name>
    <dbReference type="NCBI Taxonomy" id="301447"/>
    <lineage>
        <taxon>Bacteria</taxon>
        <taxon>Bacillati</taxon>
        <taxon>Bacillota</taxon>
        <taxon>Bacilli</taxon>
        <taxon>Lactobacillales</taxon>
        <taxon>Streptococcaceae</taxon>
        <taxon>Streptococcus</taxon>
    </lineage>
</organism>
<dbReference type="EMBL" id="AE004092">
    <property type="protein sequence ID" value="AAK34785.1"/>
    <property type="molecule type" value="Genomic_DNA"/>
</dbReference>
<dbReference type="EMBL" id="CP000017">
    <property type="protein sequence ID" value="AAZ52423.1"/>
    <property type="molecule type" value="Genomic_DNA"/>
</dbReference>
<dbReference type="RefSeq" id="NP_270064.1">
    <property type="nucleotide sequence ID" value="NC_002737.2"/>
</dbReference>
<dbReference type="SMR" id="Q99XL8"/>
<dbReference type="PaxDb" id="1314-HKU360_01919"/>
<dbReference type="KEGG" id="spy:SPy_2148"/>
<dbReference type="KEGG" id="spz:M5005_Spy1805"/>
<dbReference type="PATRIC" id="fig|160490.10.peg.1860"/>
<dbReference type="HOGENOM" id="CLU_002472_3_1_9"/>
<dbReference type="OMA" id="TPMMAQY"/>
<dbReference type="Proteomes" id="UP000000750">
    <property type="component" value="Chromosome"/>
</dbReference>
<dbReference type="GO" id="GO:0005829">
    <property type="term" value="C:cytosol"/>
    <property type="evidence" value="ECO:0007669"/>
    <property type="project" value="TreeGrafter"/>
</dbReference>
<dbReference type="GO" id="GO:0005524">
    <property type="term" value="F:ATP binding"/>
    <property type="evidence" value="ECO:0007669"/>
    <property type="project" value="UniProtKB-UniRule"/>
</dbReference>
<dbReference type="GO" id="GO:0140664">
    <property type="term" value="F:ATP-dependent DNA damage sensor activity"/>
    <property type="evidence" value="ECO:0007669"/>
    <property type="project" value="InterPro"/>
</dbReference>
<dbReference type="GO" id="GO:0003684">
    <property type="term" value="F:damaged DNA binding"/>
    <property type="evidence" value="ECO:0007669"/>
    <property type="project" value="UniProtKB-UniRule"/>
</dbReference>
<dbReference type="GO" id="GO:0030983">
    <property type="term" value="F:mismatched DNA binding"/>
    <property type="evidence" value="ECO:0007669"/>
    <property type="project" value="InterPro"/>
</dbReference>
<dbReference type="GO" id="GO:0006298">
    <property type="term" value="P:mismatch repair"/>
    <property type="evidence" value="ECO:0007669"/>
    <property type="project" value="UniProtKB-UniRule"/>
</dbReference>
<dbReference type="CDD" id="cd03284">
    <property type="entry name" value="ABC_MutS1"/>
    <property type="match status" value="1"/>
</dbReference>
<dbReference type="FunFam" id="1.10.1420.10:FF:000001">
    <property type="entry name" value="DNA mismatch repair protein MutS"/>
    <property type="match status" value="1"/>
</dbReference>
<dbReference type="FunFam" id="3.40.1170.10:FF:000001">
    <property type="entry name" value="DNA mismatch repair protein MutS"/>
    <property type="match status" value="1"/>
</dbReference>
<dbReference type="FunFam" id="3.40.50.300:FF:000896">
    <property type="entry name" value="DNA mismatch repair protein MutS"/>
    <property type="match status" value="1"/>
</dbReference>
<dbReference type="Gene3D" id="1.10.1420.10">
    <property type="match status" value="2"/>
</dbReference>
<dbReference type="Gene3D" id="3.40.1170.10">
    <property type="entry name" value="DNA repair protein MutS, domain I"/>
    <property type="match status" value="1"/>
</dbReference>
<dbReference type="Gene3D" id="3.30.420.110">
    <property type="entry name" value="MutS, connector domain"/>
    <property type="match status" value="1"/>
</dbReference>
<dbReference type="Gene3D" id="3.40.50.300">
    <property type="entry name" value="P-loop containing nucleotide triphosphate hydrolases"/>
    <property type="match status" value="1"/>
</dbReference>
<dbReference type="HAMAP" id="MF_00096">
    <property type="entry name" value="MutS"/>
    <property type="match status" value="1"/>
</dbReference>
<dbReference type="InterPro" id="IPR005748">
    <property type="entry name" value="DNA_mismatch_repair_MutS"/>
</dbReference>
<dbReference type="InterPro" id="IPR007695">
    <property type="entry name" value="DNA_mismatch_repair_MutS-lik_N"/>
</dbReference>
<dbReference type="InterPro" id="IPR017261">
    <property type="entry name" value="DNA_mismatch_repair_MutS/MSH"/>
</dbReference>
<dbReference type="InterPro" id="IPR000432">
    <property type="entry name" value="DNA_mismatch_repair_MutS_C"/>
</dbReference>
<dbReference type="InterPro" id="IPR007861">
    <property type="entry name" value="DNA_mismatch_repair_MutS_clamp"/>
</dbReference>
<dbReference type="InterPro" id="IPR007696">
    <property type="entry name" value="DNA_mismatch_repair_MutS_core"/>
</dbReference>
<dbReference type="InterPro" id="IPR016151">
    <property type="entry name" value="DNA_mismatch_repair_MutS_N"/>
</dbReference>
<dbReference type="InterPro" id="IPR036187">
    <property type="entry name" value="DNA_mismatch_repair_MutS_sf"/>
</dbReference>
<dbReference type="InterPro" id="IPR007860">
    <property type="entry name" value="DNA_mmatch_repair_MutS_con_dom"/>
</dbReference>
<dbReference type="InterPro" id="IPR045076">
    <property type="entry name" value="MutS"/>
</dbReference>
<dbReference type="InterPro" id="IPR036678">
    <property type="entry name" value="MutS_con_dom_sf"/>
</dbReference>
<dbReference type="InterPro" id="IPR027417">
    <property type="entry name" value="P-loop_NTPase"/>
</dbReference>
<dbReference type="NCBIfam" id="TIGR01070">
    <property type="entry name" value="mutS1"/>
    <property type="match status" value="1"/>
</dbReference>
<dbReference type="NCBIfam" id="NF003810">
    <property type="entry name" value="PRK05399.1"/>
    <property type="match status" value="1"/>
</dbReference>
<dbReference type="PANTHER" id="PTHR11361:SF34">
    <property type="entry name" value="DNA MISMATCH REPAIR PROTEIN MSH1, MITOCHONDRIAL"/>
    <property type="match status" value="1"/>
</dbReference>
<dbReference type="PANTHER" id="PTHR11361">
    <property type="entry name" value="DNA MISMATCH REPAIR PROTEIN MUTS FAMILY MEMBER"/>
    <property type="match status" value="1"/>
</dbReference>
<dbReference type="Pfam" id="PF01624">
    <property type="entry name" value="MutS_I"/>
    <property type="match status" value="1"/>
</dbReference>
<dbReference type="Pfam" id="PF05188">
    <property type="entry name" value="MutS_II"/>
    <property type="match status" value="1"/>
</dbReference>
<dbReference type="Pfam" id="PF05192">
    <property type="entry name" value="MutS_III"/>
    <property type="match status" value="1"/>
</dbReference>
<dbReference type="Pfam" id="PF05190">
    <property type="entry name" value="MutS_IV"/>
    <property type="match status" value="1"/>
</dbReference>
<dbReference type="Pfam" id="PF00488">
    <property type="entry name" value="MutS_V"/>
    <property type="match status" value="1"/>
</dbReference>
<dbReference type="PIRSF" id="PIRSF037677">
    <property type="entry name" value="DNA_mis_repair_Msh6"/>
    <property type="match status" value="1"/>
</dbReference>
<dbReference type="SMART" id="SM00534">
    <property type="entry name" value="MUTSac"/>
    <property type="match status" value="1"/>
</dbReference>
<dbReference type="SMART" id="SM00533">
    <property type="entry name" value="MUTSd"/>
    <property type="match status" value="1"/>
</dbReference>
<dbReference type="SUPFAM" id="SSF55271">
    <property type="entry name" value="DNA repair protein MutS, domain I"/>
    <property type="match status" value="1"/>
</dbReference>
<dbReference type="SUPFAM" id="SSF53150">
    <property type="entry name" value="DNA repair protein MutS, domain II"/>
    <property type="match status" value="1"/>
</dbReference>
<dbReference type="SUPFAM" id="SSF48334">
    <property type="entry name" value="DNA repair protein MutS, domain III"/>
    <property type="match status" value="1"/>
</dbReference>
<dbReference type="SUPFAM" id="SSF52540">
    <property type="entry name" value="P-loop containing nucleoside triphosphate hydrolases"/>
    <property type="match status" value="1"/>
</dbReference>
<dbReference type="PROSITE" id="PS00486">
    <property type="entry name" value="DNA_MISMATCH_REPAIR_2"/>
    <property type="match status" value="1"/>
</dbReference>
<gene>
    <name type="primary">mutS</name>
    <name type="ordered locus">SPy_2148</name>
    <name type="ordered locus">M5005_Spy1805</name>
</gene>